<reference key="1">
    <citation type="journal article" date="2005" name="Nat. Biotechnol.">
        <title>The genome sequence of the ethanologenic bacterium Zymomonas mobilis ZM4.</title>
        <authorList>
            <person name="Seo J.-S."/>
            <person name="Chong H."/>
            <person name="Park H.S."/>
            <person name="Yoon K.-O."/>
            <person name="Jung C."/>
            <person name="Kim J.J."/>
            <person name="Hong J.H."/>
            <person name="Kim H."/>
            <person name="Kim J.-H."/>
            <person name="Kil J.-I."/>
            <person name="Park C.J."/>
            <person name="Oh H.-M."/>
            <person name="Lee J.-S."/>
            <person name="Jin S.-J."/>
            <person name="Um H.-W."/>
            <person name="Lee H.-J."/>
            <person name="Oh S.-J."/>
            <person name="Kim J.Y."/>
            <person name="Kang H.L."/>
            <person name="Lee S.Y."/>
            <person name="Lee K.J."/>
            <person name="Kang H.S."/>
        </authorList>
    </citation>
    <scope>NUCLEOTIDE SEQUENCE [LARGE SCALE GENOMIC DNA]</scope>
    <source>
        <strain>ATCC 31821 / ZM4 / CP4</strain>
    </source>
</reference>
<accession>Q5NNN4</accession>
<comment type="catalytic activity">
    <reaction evidence="1">
        <text>5-amino-1-(5-phospho-D-ribosyl)imidazole-4-carboxylate + L-aspartate + ATP = (2S)-2-[5-amino-1-(5-phospho-beta-D-ribosyl)imidazole-4-carboxamido]succinate + ADP + phosphate + 2 H(+)</text>
        <dbReference type="Rhea" id="RHEA:22628"/>
        <dbReference type="ChEBI" id="CHEBI:15378"/>
        <dbReference type="ChEBI" id="CHEBI:29991"/>
        <dbReference type="ChEBI" id="CHEBI:30616"/>
        <dbReference type="ChEBI" id="CHEBI:43474"/>
        <dbReference type="ChEBI" id="CHEBI:58443"/>
        <dbReference type="ChEBI" id="CHEBI:77657"/>
        <dbReference type="ChEBI" id="CHEBI:456216"/>
        <dbReference type="EC" id="6.3.2.6"/>
    </reaction>
</comment>
<comment type="pathway">
    <text evidence="1">Purine metabolism; IMP biosynthesis via de novo pathway; 5-amino-1-(5-phospho-D-ribosyl)imidazole-4-carboxamide from 5-amino-1-(5-phospho-D-ribosyl)imidazole-4-carboxylate: step 1/2.</text>
</comment>
<comment type="similarity">
    <text evidence="1">Belongs to the SAICAR synthetase family.</text>
</comment>
<name>PUR7_ZYMMO</name>
<dbReference type="EC" id="6.3.2.6" evidence="1"/>
<dbReference type="EMBL" id="AE008692">
    <property type="protein sequence ID" value="AAV89676.1"/>
    <property type="molecule type" value="Genomic_DNA"/>
</dbReference>
<dbReference type="RefSeq" id="WP_011240892.1">
    <property type="nucleotide sequence ID" value="NZ_CP035711.1"/>
</dbReference>
<dbReference type="SMR" id="Q5NNN4"/>
<dbReference type="STRING" id="264203.ZMO1052"/>
<dbReference type="GeneID" id="79903813"/>
<dbReference type="KEGG" id="zmo:ZMO1052"/>
<dbReference type="eggNOG" id="COG0152">
    <property type="taxonomic scope" value="Bacteria"/>
</dbReference>
<dbReference type="HOGENOM" id="CLU_061495_2_0_5"/>
<dbReference type="UniPathway" id="UPA00074">
    <property type="reaction ID" value="UER00131"/>
</dbReference>
<dbReference type="Proteomes" id="UP000001173">
    <property type="component" value="Chromosome"/>
</dbReference>
<dbReference type="GO" id="GO:0005829">
    <property type="term" value="C:cytosol"/>
    <property type="evidence" value="ECO:0007669"/>
    <property type="project" value="TreeGrafter"/>
</dbReference>
<dbReference type="GO" id="GO:0005524">
    <property type="term" value="F:ATP binding"/>
    <property type="evidence" value="ECO:0007669"/>
    <property type="project" value="UniProtKB-KW"/>
</dbReference>
<dbReference type="GO" id="GO:0004639">
    <property type="term" value="F:phosphoribosylaminoimidazolesuccinocarboxamide synthase activity"/>
    <property type="evidence" value="ECO:0007669"/>
    <property type="project" value="UniProtKB-UniRule"/>
</dbReference>
<dbReference type="GO" id="GO:0006189">
    <property type="term" value="P:'de novo' IMP biosynthetic process"/>
    <property type="evidence" value="ECO:0007669"/>
    <property type="project" value="UniProtKB-UniRule"/>
</dbReference>
<dbReference type="GO" id="GO:0009236">
    <property type="term" value="P:cobalamin biosynthetic process"/>
    <property type="evidence" value="ECO:0007669"/>
    <property type="project" value="InterPro"/>
</dbReference>
<dbReference type="CDD" id="cd01415">
    <property type="entry name" value="SAICAR_synt_PurC"/>
    <property type="match status" value="1"/>
</dbReference>
<dbReference type="FunFam" id="3.30.470.20:FF:000006">
    <property type="entry name" value="Phosphoribosylaminoimidazole-succinocarboxamide synthase"/>
    <property type="match status" value="1"/>
</dbReference>
<dbReference type="Gene3D" id="3.30.470.20">
    <property type="entry name" value="ATP-grasp fold, B domain"/>
    <property type="match status" value="1"/>
</dbReference>
<dbReference type="Gene3D" id="3.30.200.20">
    <property type="entry name" value="Phosphorylase Kinase, domain 1"/>
    <property type="match status" value="1"/>
</dbReference>
<dbReference type="HAMAP" id="MF_00137">
    <property type="entry name" value="SAICAR_synth"/>
    <property type="match status" value="1"/>
</dbReference>
<dbReference type="InterPro" id="IPR028923">
    <property type="entry name" value="SAICAR_synt/ADE2_N"/>
</dbReference>
<dbReference type="InterPro" id="IPR033934">
    <property type="entry name" value="SAICAR_synt_PurC"/>
</dbReference>
<dbReference type="InterPro" id="IPR001636">
    <property type="entry name" value="SAICAR_synth"/>
</dbReference>
<dbReference type="InterPro" id="IPR050089">
    <property type="entry name" value="SAICAR_synthetase"/>
</dbReference>
<dbReference type="InterPro" id="IPR018236">
    <property type="entry name" value="SAICAR_synthetase_CS"/>
</dbReference>
<dbReference type="NCBIfam" id="TIGR00081">
    <property type="entry name" value="purC"/>
    <property type="match status" value="1"/>
</dbReference>
<dbReference type="PANTHER" id="PTHR43599">
    <property type="entry name" value="MULTIFUNCTIONAL PROTEIN ADE2"/>
    <property type="match status" value="1"/>
</dbReference>
<dbReference type="PANTHER" id="PTHR43599:SF3">
    <property type="entry name" value="SI:DKEY-6E2.2"/>
    <property type="match status" value="1"/>
</dbReference>
<dbReference type="Pfam" id="PF01259">
    <property type="entry name" value="SAICAR_synt"/>
    <property type="match status" value="1"/>
</dbReference>
<dbReference type="SUPFAM" id="SSF56104">
    <property type="entry name" value="SAICAR synthase-like"/>
    <property type="match status" value="1"/>
</dbReference>
<dbReference type="PROSITE" id="PS01057">
    <property type="entry name" value="SAICAR_SYNTHETASE_1"/>
    <property type="match status" value="1"/>
</dbReference>
<dbReference type="PROSITE" id="PS01058">
    <property type="entry name" value="SAICAR_SYNTHETASE_2"/>
    <property type="match status" value="1"/>
</dbReference>
<feature type="chain" id="PRO_1000018819" description="Phosphoribosylaminoimidazole-succinocarboxamide synthase">
    <location>
        <begin position="1"/>
        <end position="259"/>
    </location>
</feature>
<evidence type="ECO:0000255" key="1">
    <source>
        <dbReference type="HAMAP-Rule" id="MF_00137"/>
    </source>
</evidence>
<protein>
    <recommendedName>
        <fullName evidence="1">Phosphoribosylaminoimidazole-succinocarboxamide synthase</fullName>
        <ecNumber evidence="1">6.3.2.6</ecNumber>
    </recommendedName>
    <alternativeName>
        <fullName evidence="1">SAICAR synthetase</fullName>
    </alternativeName>
</protein>
<keyword id="KW-0067">ATP-binding</keyword>
<keyword id="KW-0436">Ligase</keyword>
<keyword id="KW-0547">Nucleotide-binding</keyword>
<keyword id="KW-0658">Purine biosynthesis</keyword>
<keyword id="KW-1185">Reference proteome</keyword>
<proteinExistence type="inferred from homology"/>
<gene>
    <name evidence="1" type="primary">purC</name>
    <name type="ordered locus">ZMO1052</name>
</gene>
<sequence>MSRRRQIYEGKAKILYEGPEPGTIIQYFKDDATAFNAQKKGMISGKGVINNRVSEHIFTLLAGIGIPTHFIRRLNMREQLVKQVEIIPIEVVIRNVAAGSLSKRLGIEEGTPLPRTIIEYYYKDDALNDPMVADEHIACFGWATQEEMHDIADMAIRVNDFMSGLFAAINIRLVDFKLEFGRVWENDYSRVLLADEISPDGCRLWDMVTNEKLDKDRFRQDLGGEVEAYQEIARRLGLLPVEPDTEVLDLESHRKNRGL</sequence>
<organism>
    <name type="scientific">Zymomonas mobilis subsp. mobilis (strain ATCC 31821 / ZM4 / CP4)</name>
    <dbReference type="NCBI Taxonomy" id="264203"/>
    <lineage>
        <taxon>Bacteria</taxon>
        <taxon>Pseudomonadati</taxon>
        <taxon>Pseudomonadota</taxon>
        <taxon>Alphaproteobacteria</taxon>
        <taxon>Sphingomonadales</taxon>
        <taxon>Zymomonadaceae</taxon>
        <taxon>Zymomonas</taxon>
    </lineage>
</organism>